<reference key="1">
    <citation type="journal article" date="2009" name="PLoS Genet.">
        <title>Organised genome dynamics in the Escherichia coli species results in highly diverse adaptive paths.</title>
        <authorList>
            <person name="Touchon M."/>
            <person name="Hoede C."/>
            <person name="Tenaillon O."/>
            <person name="Barbe V."/>
            <person name="Baeriswyl S."/>
            <person name="Bidet P."/>
            <person name="Bingen E."/>
            <person name="Bonacorsi S."/>
            <person name="Bouchier C."/>
            <person name="Bouvet O."/>
            <person name="Calteau A."/>
            <person name="Chiapello H."/>
            <person name="Clermont O."/>
            <person name="Cruveiller S."/>
            <person name="Danchin A."/>
            <person name="Diard M."/>
            <person name="Dossat C."/>
            <person name="Karoui M.E."/>
            <person name="Frapy E."/>
            <person name="Garry L."/>
            <person name="Ghigo J.M."/>
            <person name="Gilles A.M."/>
            <person name="Johnson J."/>
            <person name="Le Bouguenec C."/>
            <person name="Lescat M."/>
            <person name="Mangenot S."/>
            <person name="Martinez-Jehanne V."/>
            <person name="Matic I."/>
            <person name="Nassif X."/>
            <person name="Oztas S."/>
            <person name="Petit M.A."/>
            <person name="Pichon C."/>
            <person name="Rouy Z."/>
            <person name="Ruf C.S."/>
            <person name="Schneider D."/>
            <person name="Tourret J."/>
            <person name="Vacherie B."/>
            <person name="Vallenet D."/>
            <person name="Medigue C."/>
            <person name="Rocha E.P.C."/>
            <person name="Denamur E."/>
        </authorList>
    </citation>
    <scope>NUCLEOTIDE SEQUENCE [LARGE SCALE GENOMIC DNA]</scope>
    <source>
        <strain>S88 / ExPEC</strain>
    </source>
</reference>
<sequence>MKPAARRRARECAVQALYSWQLSQNDIADVEYQFLAEQDVKDVDVLYFRELLAGVATNTAYLDGLMKPYLSRLLEELGQVEKAVLRIALYELSKRSDVPYKVAINEAIELAKSFGAEDSHKFVNGVLDKAAPVIRPNKK</sequence>
<keyword id="KW-1185">Reference proteome</keyword>
<keyword id="KW-0694">RNA-binding</keyword>
<keyword id="KW-0804">Transcription</keyword>
<keyword id="KW-0889">Transcription antitermination</keyword>
<keyword id="KW-0805">Transcription regulation</keyword>
<proteinExistence type="inferred from homology"/>
<organism>
    <name type="scientific">Escherichia coli O45:K1 (strain S88 / ExPEC)</name>
    <dbReference type="NCBI Taxonomy" id="585035"/>
    <lineage>
        <taxon>Bacteria</taxon>
        <taxon>Pseudomonadati</taxon>
        <taxon>Pseudomonadota</taxon>
        <taxon>Gammaproteobacteria</taxon>
        <taxon>Enterobacterales</taxon>
        <taxon>Enterobacteriaceae</taxon>
        <taxon>Escherichia</taxon>
    </lineage>
</organism>
<comment type="function">
    <text evidence="1">Involved in transcription antitermination. Required for transcription of ribosomal RNA (rRNA) genes. Binds specifically to the boxA antiterminator sequence of the ribosomal RNA (rrn) operons.</text>
</comment>
<comment type="similarity">
    <text evidence="1">Belongs to the NusB family.</text>
</comment>
<evidence type="ECO:0000255" key="1">
    <source>
        <dbReference type="HAMAP-Rule" id="MF_00073"/>
    </source>
</evidence>
<feature type="chain" id="PRO_1000117049" description="Transcription antitermination protein NusB">
    <location>
        <begin position="1"/>
        <end position="139"/>
    </location>
</feature>
<gene>
    <name evidence="1" type="primary">nusB</name>
    <name type="ordered locus">ECS88_0411</name>
</gene>
<name>NUSB_ECO45</name>
<accession>B7MD74</accession>
<protein>
    <recommendedName>
        <fullName evidence="1">Transcription antitermination protein NusB</fullName>
    </recommendedName>
    <alternativeName>
        <fullName evidence="1">Antitermination factor NusB</fullName>
    </alternativeName>
</protein>
<dbReference type="EMBL" id="CU928161">
    <property type="protein sequence ID" value="CAR01759.1"/>
    <property type="molecule type" value="Genomic_DNA"/>
</dbReference>
<dbReference type="RefSeq" id="WP_000801125.1">
    <property type="nucleotide sequence ID" value="NC_011742.1"/>
</dbReference>
<dbReference type="SMR" id="B7MD74"/>
<dbReference type="GeneID" id="93777044"/>
<dbReference type="KEGG" id="ecz:ECS88_0411"/>
<dbReference type="HOGENOM" id="CLU_087843_4_1_6"/>
<dbReference type="Proteomes" id="UP000000747">
    <property type="component" value="Chromosome"/>
</dbReference>
<dbReference type="GO" id="GO:0005829">
    <property type="term" value="C:cytosol"/>
    <property type="evidence" value="ECO:0007669"/>
    <property type="project" value="TreeGrafter"/>
</dbReference>
<dbReference type="GO" id="GO:0003723">
    <property type="term" value="F:RNA binding"/>
    <property type="evidence" value="ECO:0007669"/>
    <property type="project" value="UniProtKB-UniRule"/>
</dbReference>
<dbReference type="GO" id="GO:0006353">
    <property type="term" value="P:DNA-templated transcription termination"/>
    <property type="evidence" value="ECO:0007669"/>
    <property type="project" value="UniProtKB-UniRule"/>
</dbReference>
<dbReference type="GO" id="GO:0031564">
    <property type="term" value="P:transcription antitermination"/>
    <property type="evidence" value="ECO:0007669"/>
    <property type="project" value="UniProtKB-KW"/>
</dbReference>
<dbReference type="CDD" id="cd00619">
    <property type="entry name" value="Terminator_NusB"/>
    <property type="match status" value="1"/>
</dbReference>
<dbReference type="FunFam" id="1.10.940.10:FF:000001">
    <property type="entry name" value="Transcription antitermination factor NusB"/>
    <property type="match status" value="1"/>
</dbReference>
<dbReference type="Gene3D" id="1.10.940.10">
    <property type="entry name" value="NusB-like"/>
    <property type="match status" value="1"/>
</dbReference>
<dbReference type="HAMAP" id="MF_00073">
    <property type="entry name" value="NusB"/>
    <property type="match status" value="1"/>
</dbReference>
<dbReference type="InterPro" id="IPR035926">
    <property type="entry name" value="NusB-like_sf"/>
</dbReference>
<dbReference type="InterPro" id="IPR011605">
    <property type="entry name" value="NusB_fam"/>
</dbReference>
<dbReference type="InterPro" id="IPR006027">
    <property type="entry name" value="NusB_RsmB_TIM44"/>
</dbReference>
<dbReference type="NCBIfam" id="TIGR01951">
    <property type="entry name" value="nusB"/>
    <property type="match status" value="1"/>
</dbReference>
<dbReference type="PANTHER" id="PTHR11078:SF3">
    <property type="entry name" value="ANTITERMINATION NUSB DOMAIN-CONTAINING PROTEIN"/>
    <property type="match status" value="1"/>
</dbReference>
<dbReference type="PANTHER" id="PTHR11078">
    <property type="entry name" value="N UTILIZATION SUBSTANCE PROTEIN B-RELATED"/>
    <property type="match status" value="1"/>
</dbReference>
<dbReference type="Pfam" id="PF01029">
    <property type="entry name" value="NusB"/>
    <property type="match status" value="1"/>
</dbReference>
<dbReference type="SUPFAM" id="SSF48013">
    <property type="entry name" value="NusB-like"/>
    <property type="match status" value="1"/>
</dbReference>